<comment type="function">
    <text evidence="1">The UvrABC repair system catalyzes the recognition and processing of DNA lesions. A damage recognition complex composed of 2 UvrA and 2 UvrB subunits scans DNA for abnormalities. Upon binding of the UvrA(2)B(2) complex to a putative damaged site, the DNA wraps around one UvrB monomer. DNA wrap is dependent on ATP binding by UvrB and probably causes local melting of the DNA helix, facilitating insertion of UvrB beta-hairpin between the DNA strands. Then UvrB probes one DNA strand for the presence of a lesion. If a lesion is found the UvrA subunits dissociate and the UvrB-DNA preincision complex is formed. This complex is subsequently bound by UvrC and the second UvrB is released. If no lesion is found, the DNA wraps around the other UvrB subunit that will check the other stand for damage.</text>
</comment>
<comment type="subunit">
    <text evidence="1">Forms a heterotetramer with UvrA during the search for lesions. Interacts with UvrC in an incision complex.</text>
</comment>
<comment type="subcellular location">
    <subcellularLocation>
        <location evidence="1">Cytoplasm</location>
    </subcellularLocation>
</comment>
<comment type="domain">
    <text evidence="1">The beta-hairpin motif is involved in DNA binding.</text>
</comment>
<comment type="miscellaneous">
    <text evidence="2">This bacteria is considerably more resistant to UV and gamma irradiation than E.coli; the E.coli-like SOS regulon model is not an appropriate model for DNA repair in this cyanobacterium.</text>
</comment>
<comment type="similarity">
    <text evidence="1">Belongs to the UvrB family.</text>
</comment>
<name>UVRB_SYNY3</name>
<proteinExistence type="inferred from homology"/>
<accession>Q55170</accession>
<organism>
    <name type="scientific">Synechocystis sp. (strain ATCC 27184 / PCC 6803 / Kazusa)</name>
    <dbReference type="NCBI Taxonomy" id="1111708"/>
    <lineage>
        <taxon>Bacteria</taxon>
        <taxon>Bacillati</taxon>
        <taxon>Cyanobacteriota</taxon>
        <taxon>Cyanophyceae</taxon>
        <taxon>Synechococcales</taxon>
        <taxon>Merismopediaceae</taxon>
        <taxon>Synechocystis</taxon>
    </lineage>
</organism>
<gene>
    <name evidence="1" type="primary">uvrB</name>
    <name type="ordered locus">sll0459</name>
</gene>
<feature type="chain" id="PRO_0000138438" description="UvrABC system protein B">
    <location>
        <begin position="1"/>
        <end position="669"/>
    </location>
</feature>
<feature type="domain" description="Helicase ATP-binding" evidence="1">
    <location>
        <begin position="27"/>
        <end position="414"/>
    </location>
</feature>
<feature type="domain" description="Helicase C-terminal" evidence="1">
    <location>
        <begin position="431"/>
        <end position="597"/>
    </location>
</feature>
<feature type="domain" description="UVR" evidence="1">
    <location>
        <begin position="628"/>
        <end position="663"/>
    </location>
</feature>
<feature type="short sequence motif" description="Beta-hairpin">
    <location>
        <begin position="93"/>
        <end position="116"/>
    </location>
</feature>
<feature type="binding site" evidence="1">
    <location>
        <begin position="40"/>
        <end position="47"/>
    </location>
    <ligand>
        <name>ATP</name>
        <dbReference type="ChEBI" id="CHEBI:30616"/>
    </ligand>
</feature>
<sequence>MTSDLFSLHAPFRPTGDQPTAIASLIESLQGEHKFQTLLGATGTGKTFTMASVIAELGRPTLVLAHNKTLAAQLCNELRQFFPENAVEYFISYYDYYQPEAYIPVTDTYIEKTASINDEIDMLRHSATRSLFERRDVIVVASISCIYGLGIPSQYLKAAVPLQVGAEYDPRLVIRDLVNVQYSRNDVELQRGRFRLKGDVLEIVPAYEDRVIRIEFFGDEVEALRLIDPVSGEILQSLDRISIYPARHFVTPEETLEKACQQIQTEMEQQVAFLEKNNLLVEAQRLSQRTRYDLEMLREVGYCNGVENYSRYLADRQAGEPPECLVDYFPEDWLLVIDESHVTIPQLRGMYNGDQARKKVLIDHGFRLPSAADNRPLKAEEFWQKVKQCVFVSATPGVWEIEQSEARVIEQVIRPTGVLDPEIFVRPTTGQVDDLYGEIQTRVKLKERVLITTLTKRMAEDLTDYFSERGIKVQYLHSEIQSIQRIEILQALRDGEFDVLIGVNLLREGLDLPEVSLVAIMDADKEGFLRAERSLIQTIGRAARHIRGQAILYADNFTDSMQKAIAETERRRKIQQEYNEKHGITPQPINKRANNAILQFLDISRRLNSQQLEEVYEQAQDLPLEKIPDLIQQLEEKMQEAAKKQEFEVAAIYRDRIQHLRDRLLGHKK</sequence>
<reference key="1">
    <citation type="journal article" date="1995" name="DNA Res.">
        <title>Sequence analysis of the genome of the unicellular cyanobacterium Synechocystis sp. strain PCC6803. I. Sequence features in the 1 Mb region from map positions 64% to 92% of the genome.</title>
        <authorList>
            <person name="Kaneko T."/>
            <person name="Tanaka A."/>
            <person name="Sato S."/>
            <person name="Kotani H."/>
            <person name="Sazuka T."/>
            <person name="Miyajima N."/>
            <person name="Sugiura M."/>
            <person name="Tabata S."/>
        </authorList>
    </citation>
    <scope>NUCLEOTIDE SEQUENCE [LARGE SCALE GENOMIC DNA]</scope>
    <source>
        <strain>ATCC 27184 / PCC 6803 / N-1</strain>
    </source>
</reference>
<reference key="2">
    <citation type="journal article" date="1996" name="DNA Res.">
        <title>Sequence analysis of the genome of the unicellular cyanobacterium Synechocystis sp. strain PCC6803. II. Sequence determination of the entire genome and assignment of potential protein-coding regions.</title>
        <authorList>
            <person name="Kaneko T."/>
            <person name="Sato S."/>
            <person name="Kotani H."/>
            <person name="Tanaka A."/>
            <person name="Asamizu E."/>
            <person name="Nakamura Y."/>
            <person name="Miyajima N."/>
            <person name="Hirosawa M."/>
            <person name="Sugiura M."/>
            <person name="Sasamoto S."/>
            <person name="Kimura T."/>
            <person name="Hosouchi T."/>
            <person name="Matsuno A."/>
            <person name="Muraki A."/>
            <person name="Nakazaki N."/>
            <person name="Naruo K."/>
            <person name="Okumura S."/>
            <person name="Shimpo S."/>
            <person name="Takeuchi C."/>
            <person name="Wada T."/>
            <person name="Watanabe A."/>
            <person name="Yamada M."/>
            <person name="Yasuda M."/>
            <person name="Tabata S."/>
        </authorList>
    </citation>
    <scope>NUCLEOTIDE SEQUENCE [LARGE SCALE GENOMIC DNA]</scope>
    <source>
        <strain>ATCC 27184 / PCC 6803 / Kazusa</strain>
    </source>
</reference>
<reference key="3">
    <citation type="journal article" date="2004" name="Mol. Microbiol.">
        <title>Function and regulation of the cyanobacterial genes lexA, recA and ruvB: LexA is critical to the survival of cells facing inorganic carbon starvation.</title>
        <authorList>
            <person name="Domain F."/>
            <person name="Houot L."/>
            <person name="Chauvat F."/>
            <person name="Cassier-Chauvat C."/>
        </authorList>
    </citation>
    <scope>DISCUSSION OF SOS REGULON</scope>
    <source>
        <strain>ATCC 27184 / PCC 6803 / Kazusa</strain>
    </source>
</reference>
<keyword id="KW-0067">ATP-binding</keyword>
<keyword id="KW-0963">Cytoplasm</keyword>
<keyword id="KW-0227">DNA damage</keyword>
<keyword id="KW-0228">DNA excision</keyword>
<keyword id="KW-0234">DNA repair</keyword>
<keyword id="KW-0267">Excision nuclease</keyword>
<keyword id="KW-0547">Nucleotide-binding</keyword>
<keyword id="KW-1185">Reference proteome</keyword>
<evidence type="ECO:0000255" key="1">
    <source>
        <dbReference type="HAMAP-Rule" id="MF_00204"/>
    </source>
</evidence>
<evidence type="ECO:0000305" key="2">
    <source>
    </source>
</evidence>
<dbReference type="EMBL" id="BA000022">
    <property type="protein sequence ID" value="BAA10309.1"/>
    <property type="molecule type" value="Genomic_DNA"/>
</dbReference>
<dbReference type="PIR" id="S74391">
    <property type="entry name" value="S74391"/>
</dbReference>
<dbReference type="SMR" id="Q55170"/>
<dbReference type="FunCoup" id="Q55170">
    <property type="interactions" value="310"/>
</dbReference>
<dbReference type="IntAct" id="Q55170">
    <property type="interactions" value="3"/>
</dbReference>
<dbReference type="STRING" id="1148.gene:10499809"/>
<dbReference type="PaxDb" id="1148-1001167"/>
<dbReference type="EnsemblBacteria" id="BAA10309">
    <property type="protein sequence ID" value="BAA10309"/>
    <property type="gene ID" value="BAA10309"/>
</dbReference>
<dbReference type="KEGG" id="syn:sll0459"/>
<dbReference type="eggNOG" id="COG0556">
    <property type="taxonomic scope" value="Bacteria"/>
</dbReference>
<dbReference type="InParanoid" id="Q55170"/>
<dbReference type="PhylomeDB" id="Q55170"/>
<dbReference type="Proteomes" id="UP000001425">
    <property type="component" value="Chromosome"/>
</dbReference>
<dbReference type="GO" id="GO:0005737">
    <property type="term" value="C:cytoplasm"/>
    <property type="evidence" value="ECO:0007669"/>
    <property type="project" value="UniProtKB-SubCell"/>
</dbReference>
<dbReference type="GO" id="GO:0009380">
    <property type="term" value="C:excinuclease repair complex"/>
    <property type="evidence" value="ECO:0000318"/>
    <property type="project" value="GO_Central"/>
</dbReference>
<dbReference type="GO" id="GO:0005524">
    <property type="term" value="F:ATP binding"/>
    <property type="evidence" value="ECO:0007669"/>
    <property type="project" value="UniProtKB-UniRule"/>
</dbReference>
<dbReference type="GO" id="GO:0016887">
    <property type="term" value="F:ATP hydrolysis activity"/>
    <property type="evidence" value="ECO:0007669"/>
    <property type="project" value="InterPro"/>
</dbReference>
<dbReference type="GO" id="GO:0003677">
    <property type="term" value="F:DNA binding"/>
    <property type="evidence" value="ECO:0007669"/>
    <property type="project" value="UniProtKB-UniRule"/>
</dbReference>
<dbReference type="GO" id="GO:0009381">
    <property type="term" value="F:excinuclease ABC activity"/>
    <property type="evidence" value="ECO:0007669"/>
    <property type="project" value="UniProtKB-UniRule"/>
</dbReference>
<dbReference type="GO" id="GO:0000715">
    <property type="term" value="P:nucleotide-excision repair, DNA damage recognition"/>
    <property type="evidence" value="ECO:0000318"/>
    <property type="project" value="GO_Central"/>
</dbReference>
<dbReference type="GO" id="GO:0009432">
    <property type="term" value="P:SOS response"/>
    <property type="evidence" value="ECO:0007669"/>
    <property type="project" value="UniProtKB-UniRule"/>
</dbReference>
<dbReference type="CDD" id="cd17916">
    <property type="entry name" value="DEXHc_UvrB"/>
    <property type="match status" value="1"/>
</dbReference>
<dbReference type="CDD" id="cd18790">
    <property type="entry name" value="SF2_C_UvrB"/>
    <property type="match status" value="1"/>
</dbReference>
<dbReference type="Gene3D" id="3.40.50.300">
    <property type="entry name" value="P-loop containing nucleotide triphosphate hydrolases"/>
    <property type="match status" value="3"/>
</dbReference>
<dbReference type="Gene3D" id="4.10.860.10">
    <property type="entry name" value="UVR domain"/>
    <property type="match status" value="1"/>
</dbReference>
<dbReference type="HAMAP" id="MF_00204">
    <property type="entry name" value="UvrB"/>
    <property type="match status" value="1"/>
</dbReference>
<dbReference type="InterPro" id="IPR006935">
    <property type="entry name" value="Helicase/UvrB_N"/>
</dbReference>
<dbReference type="InterPro" id="IPR014001">
    <property type="entry name" value="Helicase_ATP-bd"/>
</dbReference>
<dbReference type="InterPro" id="IPR001650">
    <property type="entry name" value="Helicase_C-like"/>
</dbReference>
<dbReference type="InterPro" id="IPR027417">
    <property type="entry name" value="P-loop_NTPase"/>
</dbReference>
<dbReference type="InterPro" id="IPR001943">
    <property type="entry name" value="UVR_dom"/>
</dbReference>
<dbReference type="InterPro" id="IPR036876">
    <property type="entry name" value="UVR_dom_sf"/>
</dbReference>
<dbReference type="InterPro" id="IPR004807">
    <property type="entry name" value="UvrB"/>
</dbReference>
<dbReference type="InterPro" id="IPR041471">
    <property type="entry name" value="UvrB_inter"/>
</dbReference>
<dbReference type="InterPro" id="IPR024759">
    <property type="entry name" value="UvrB_YAD/RRR_dom"/>
</dbReference>
<dbReference type="NCBIfam" id="NF003673">
    <property type="entry name" value="PRK05298.1"/>
    <property type="match status" value="1"/>
</dbReference>
<dbReference type="NCBIfam" id="TIGR00631">
    <property type="entry name" value="uvrb"/>
    <property type="match status" value="1"/>
</dbReference>
<dbReference type="PANTHER" id="PTHR24029">
    <property type="entry name" value="UVRABC SYSTEM PROTEIN B"/>
    <property type="match status" value="1"/>
</dbReference>
<dbReference type="PANTHER" id="PTHR24029:SF0">
    <property type="entry name" value="UVRABC SYSTEM PROTEIN B"/>
    <property type="match status" value="1"/>
</dbReference>
<dbReference type="Pfam" id="PF00271">
    <property type="entry name" value="Helicase_C"/>
    <property type="match status" value="1"/>
</dbReference>
<dbReference type="Pfam" id="PF04851">
    <property type="entry name" value="ResIII"/>
    <property type="match status" value="1"/>
</dbReference>
<dbReference type="Pfam" id="PF02151">
    <property type="entry name" value="UVR"/>
    <property type="match status" value="1"/>
</dbReference>
<dbReference type="Pfam" id="PF12344">
    <property type="entry name" value="UvrB"/>
    <property type="match status" value="1"/>
</dbReference>
<dbReference type="Pfam" id="PF17757">
    <property type="entry name" value="UvrB_inter"/>
    <property type="match status" value="1"/>
</dbReference>
<dbReference type="SMART" id="SM00487">
    <property type="entry name" value="DEXDc"/>
    <property type="match status" value="1"/>
</dbReference>
<dbReference type="SMART" id="SM00490">
    <property type="entry name" value="HELICc"/>
    <property type="match status" value="1"/>
</dbReference>
<dbReference type="SUPFAM" id="SSF46600">
    <property type="entry name" value="C-terminal UvrC-binding domain of UvrB"/>
    <property type="match status" value="1"/>
</dbReference>
<dbReference type="SUPFAM" id="SSF52540">
    <property type="entry name" value="P-loop containing nucleoside triphosphate hydrolases"/>
    <property type="match status" value="2"/>
</dbReference>
<dbReference type="PROSITE" id="PS51192">
    <property type="entry name" value="HELICASE_ATP_BIND_1"/>
    <property type="match status" value="1"/>
</dbReference>
<dbReference type="PROSITE" id="PS51194">
    <property type="entry name" value="HELICASE_CTER"/>
    <property type="match status" value="1"/>
</dbReference>
<dbReference type="PROSITE" id="PS50151">
    <property type="entry name" value="UVR"/>
    <property type="match status" value="1"/>
</dbReference>
<protein>
    <recommendedName>
        <fullName evidence="1">UvrABC system protein B</fullName>
        <shortName evidence="1">Protein UvrB</shortName>
    </recommendedName>
    <alternativeName>
        <fullName evidence="1">Excinuclease ABC subunit B</fullName>
    </alternativeName>
</protein>